<comment type="function">
    <text evidence="4">Involved in maceration and soft-rotting of plant tissue. Hydrolyzes the 1,4-alpha glycosidic bonds of de-esterified pectate in the smooth region of the plant cell wall.</text>
</comment>
<comment type="catalytic activity">
    <reaction>
        <text>(1,4-alpha-D-galacturonosyl)n+m + H2O = (1,4-alpha-D-galacturonosyl)n + (1,4-alpha-D-galacturonosyl)m.</text>
        <dbReference type="EC" id="3.2.1.15"/>
    </reaction>
</comment>
<comment type="biophysicochemical properties">
    <phDependence>
        <text evidence="4">Optimum pH is 5.1.</text>
    </phDependence>
    <temperatureDependence>
        <text evidence="4">Optimum temperature is 38 degrees Celsius.</text>
    </temperatureDependence>
</comment>
<comment type="subcellular location">
    <subcellularLocation>
        <location evidence="5">Secreted</location>
    </subcellularLocation>
</comment>
<comment type="similarity">
    <text evidence="5">Belongs to the glycosyl hydrolase 28 family.</text>
</comment>
<comment type="sequence caution" evidence="5">
    <conflict type="erroneous gene model prediction">
        <sequence resource="EMBL-CDS" id="CBF77661"/>
    </conflict>
</comment>
<comment type="sequence caution" evidence="5">
    <conflict type="erroneous gene model prediction">
        <sequence resource="EMBL-CDS" id="EAA60289"/>
    </conflict>
</comment>
<sequence length="364" mass="37857">MHFLQNSLIAAAMGAALVAAAPAADLDARSSCTFTSASAAKSGASKCSTVTLKSIQVPAGETLDLTGLKSGATVIFEGETTFGYKEWKGPLISMSGDKITVKQASGAKINCDGARWWDTKGSNGGKTKPKFFSAHKLNNSKIQGLKIYNTPVQGFSIQSDHLTISDVTIDNSAGTSKGHNTDAFDIGSSTYITIDGATVYNQDDCIAINSGEHITFTNGYCSGGHGLSIGSVGGRSDNTVKSVTISNSKVVDSQNGVRIKTVYKATGSVTDVTFQDIELSGITKYGLIVEQDYENGSPTGTPTNGVEVEDITFKKITGSVDSSATRVNILCGSGSCKDWTWSGVDITGGKKSSKCKNVPSGASC</sequence>
<protein>
    <recommendedName>
        <fullName>Endopolygalacturonase B</fullName>
        <ecNumber>3.2.1.15</ecNumber>
    </recommendedName>
    <alternativeName>
        <fullName>Pectinase B</fullName>
    </alternativeName>
    <alternativeName>
        <fullName>Polygalacturonase B</fullName>
    </alternativeName>
</protein>
<evidence type="ECO:0000250" key="1"/>
<evidence type="ECO:0000255" key="2"/>
<evidence type="ECO:0000255" key="3">
    <source>
        <dbReference type="PROSITE-ProRule" id="PRU10052"/>
    </source>
</evidence>
<evidence type="ECO:0000269" key="4">
    <source>
    </source>
</evidence>
<evidence type="ECO:0000305" key="5"/>
<organism>
    <name type="scientific">Emericella nidulans (strain FGSC A4 / ATCC 38163 / CBS 112.46 / NRRL 194 / M139)</name>
    <name type="common">Aspergillus nidulans</name>
    <dbReference type="NCBI Taxonomy" id="227321"/>
    <lineage>
        <taxon>Eukaryota</taxon>
        <taxon>Fungi</taxon>
        <taxon>Dikarya</taxon>
        <taxon>Ascomycota</taxon>
        <taxon>Pezizomycotina</taxon>
        <taxon>Eurotiomycetes</taxon>
        <taxon>Eurotiomycetidae</taxon>
        <taxon>Eurotiales</taxon>
        <taxon>Aspergillaceae</taxon>
        <taxon>Aspergillus</taxon>
        <taxon>Aspergillus subgen. Nidulantes</taxon>
    </lineage>
</organism>
<name>PGLRB_EMENI</name>
<dbReference type="EC" id="3.2.1.15"/>
<dbReference type="EMBL" id="DQ490492">
    <property type="protein sequence ID" value="ABF50868.1"/>
    <property type="molecule type" value="mRNA"/>
</dbReference>
<dbReference type="EMBL" id="AACD01000076">
    <property type="protein sequence ID" value="EAA60289.1"/>
    <property type="status" value="ALT_SEQ"/>
    <property type="molecule type" value="Genomic_DNA"/>
</dbReference>
<dbReference type="EMBL" id="BN001303">
    <property type="protein sequence ID" value="CBF77661.1"/>
    <property type="status" value="ALT_SEQ"/>
    <property type="molecule type" value="Genomic_DNA"/>
</dbReference>
<dbReference type="RefSeq" id="XP_661976.1">
    <property type="nucleotide sequence ID" value="XM_656884.1"/>
</dbReference>
<dbReference type="SMR" id="Q5B508"/>
<dbReference type="FunCoup" id="Q5B508">
    <property type="interactions" value="129"/>
</dbReference>
<dbReference type="STRING" id="227321.Q5B508"/>
<dbReference type="CAZy" id="GH28">
    <property type="family name" value="Glycoside Hydrolase Family 28"/>
</dbReference>
<dbReference type="GlyCosmos" id="Q5B508">
    <property type="glycosylation" value="1 site, No reported glycans"/>
</dbReference>
<dbReference type="KEGG" id="ani:ANIA_04372"/>
<dbReference type="VEuPathDB" id="FungiDB:AN4372"/>
<dbReference type="eggNOG" id="ENOG502QTAW">
    <property type="taxonomic scope" value="Eukaryota"/>
</dbReference>
<dbReference type="HOGENOM" id="CLU_040116_0_0_1"/>
<dbReference type="InParanoid" id="Q5B508"/>
<dbReference type="OrthoDB" id="1546079at2759"/>
<dbReference type="Proteomes" id="UP000000560">
    <property type="component" value="Chromosome III"/>
</dbReference>
<dbReference type="GO" id="GO:0005576">
    <property type="term" value="C:extracellular region"/>
    <property type="evidence" value="ECO:0000318"/>
    <property type="project" value="GO_Central"/>
</dbReference>
<dbReference type="GO" id="GO:0004650">
    <property type="term" value="F:polygalacturonase activity"/>
    <property type="evidence" value="ECO:0000314"/>
    <property type="project" value="UniProtKB"/>
</dbReference>
<dbReference type="GO" id="GO:0071555">
    <property type="term" value="P:cell wall organization"/>
    <property type="evidence" value="ECO:0007669"/>
    <property type="project" value="UniProtKB-KW"/>
</dbReference>
<dbReference type="GO" id="GO:0045490">
    <property type="term" value="P:pectin catabolic process"/>
    <property type="evidence" value="ECO:0000314"/>
    <property type="project" value="UniProtKB"/>
</dbReference>
<dbReference type="FunFam" id="2.160.20.10:FF:000002">
    <property type="entry name" value="Endopolygalacturonase D"/>
    <property type="match status" value="1"/>
</dbReference>
<dbReference type="Gene3D" id="2.160.20.10">
    <property type="entry name" value="Single-stranded right-handed beta-helix, Pectin lyase-like"/>
    <property type="match status" value="1"/>
</dbReference>
<dbReference type="InterPro" id="IPR000743">
    <property type="entry name" value="Glyco_hydro_28"/>
</dbReference>
<dbReference type="InterPro" id="IPR050434">
    <property type="entry name" value="Glycosyl_hydrlase_28"/>
</dbReference>
<dbReference type="InterPro" id="IPR006626">
    <property type="entry name" value="PbH1"/>
</dbReference>
<dbReference type="InterPro" id="IPR012334">
    <property type="entry name" value="Pectin_lyas_fold"/>
</dbReference>
<dbReference type="InterPro" id="IPR011050">
    <property type="entry name" value="Pectin_lyase_fold/virulence"/>
</dbReference>
<dbReference type="PANTHER" id="PTHR31884:SF13">
    <property type="entry name" value="ENDOPOLYGALACTURONASE B"/>
    <property type="match status" value="1"/>
</dbReference>
<dbReference type="PANTHER" id="PTHR31884">
    <property type="entry name" value="POLYGALACTURONASE"/>
    <property type="match status" value="1"/>
</dbReference>
<dbReference type="Pfam" id="PF00295">
    <property type="entry name" value="Glyco_hydro_28"/>
    <property type="match status" value="1"/>
</dbReference>
<dbReference type="SMART" id="SM00710">
    <property type="entry name" value="PbH1"/>
    <property type="match status" value="6"/>
</dbReference>
<dbReference type="SUPFAM" id="SSF51126">
    <property type="entry name" value="Pectin lyase-like"/>
    <property type="match status" value="1"/>
</dbReference>
<dbReference type="PROSITE" id="PS00502">
    <property type="entry name" value="POLYGALACTURONASE"/>
    <property type="match status" value="1"/>
</dbReference>
<reference key="1">
    <citation type="journal article" date="2006" name="Proc. Natl. Acad. Sci. U.S.A.">
        <title>Development and application of a suite of polysaccharide-degrading enzymes for analyzing plant cell walls.</title>
        <authorList>
            <person name="Bauer S."/>
            <person name="Vasu P."/>
            <person name="Persson S."/>
            <person name="Mort A.J."/>
            <person name="Somerville C.R."/>
        </authorList>
    </citation>
    <scope>NUCLEOTIDE SEQUENCE [MRNA]</scope>
    <scope>FUNCTION</scope>
    <scope>BIOPHYSICOCHEMICAL PROPERTIES</scope>
    <source>
        <strain>FGSC A4 / ATCC 38163 / CBS 112.46 / NRRL 194 / M139</strain>
    </source>
</reference>
<reference key="2">
    <citation type="journal article" date="2005" name="Nature">
        <title>Sequencing of Aspergillus nidulans and comparative analysis with A. fumigatus and A. oryzae.</title>
        <authorList>
            <person name="Galagan J.E."/>
            <person name="Calvo S.E."/>
            <person name="Cuomo C."/>
            <person name="Ma L.-J."/>
            <person name="Wortman J.R."/>
            <person name="Batzoglou S."/>
            <person name="Lee S.-I."/>
            <person name="Bastuerkmen M."/>
            <person name="Spevak C.C."/>
            <person name="Clutterbuck J."/>
            <person name="Kapitonov V."/>
            <person name="Jurka J."/>
            <person name="Scazzocchio C."/>
            <person name="Farman M.L."/>
            <person name="Butler J."/>
            <person name="Purcell S."/>
            <person name="Harris S."/>
            <person name="Braus G.H."/>
            <person name="Draht O."/>
            <person name="Busch S."/>
            <person name="D'Enfert C."/>
            <person name="Bouchier C."/>
            <person name="Goldman G.H."/>
            <person name="Bell-Pedersen D."/>
            <person name="Griffiths-Jones S."/>
            <person name="Doonan J.H."/>
            <person name="Yu J."/>
            <person name="Vienken K."/>
            <person name="Pain A."/>
            <person name="Freitag M."/>
            <person name="Selker E.U."/>
            <person name="Archer D.B."/>
            <person name="Penalva M.A."/>
            <person name="Oakley B.R."/>
            <person name="Momany M."/>
            <person name="Tanaka T."/>
            <person name="Kumagai T."/>
            <person name="Asai K."/>
            <person name="Machida M."/>
            <person name="Nierman W.C."/>
            <person name="Denning D.W."/>
            <person name="Caddick M.X."/>
            <person name="Hynes M."/>
            <person name="Paoletti M."/>
            <person name="Fischer R."/>
            <person name="Miller B.L."/>
            <person name="Dyer P.S."/>
            <person name="Sachs M.S."/>
            <person name="Osmani S.A."/>
            <person name="Birren B.W."/>
        </authorList>
    </citation>
    <scope>NUCLEOTIDE SEQUENCE [LARGE SCALE GENOMIC DNA]</scope>
    <source>
        <strain>FGSC A4 / ATCC 38163 / CBS 112.46 / NRRL 194 / M139</strain>
    </source>
</reference>
<reference key="3">
    <citation type="journal article" date="2009" name="Fungal Genet. Biol.">
        <title>The 2008 update of the Aspergillus nidulans genome annotation: a community effort.</title>
        <authorList>
            <person name="Wortman J.R."/>
            <person name="Gilsenan J.M."/>
            <person name="Joardar V."/>
            <person name="Deegan J."/>
            <person name="Clutterbuck J."/>
            <person name="Andersen M.R."/>
            <person name="Archer D."/>
            <person name="Bencina M."/>
            <person name="Braus G."/>
            <person name="Coutinho P."/>
            <person name="von Dohren H."/>
            <person name="Doonan J."/>
            <person name="Driessen A.J."/>
            <person name="Durek P."/>
            <person name="Espeso E."/>
            <person name="Fekete E."/>
            <person name="Flipphi M."/>
            <person name="Estrada C.G."/>
            <person name="Geysens S."/>
            <person name="Goldman G."/>
            <person name="de Groot P.W."/>
            <person name="Hansen K."/>
            <person name="Harris S.D."/>
            <person name="Heinekamp T."/>
            <person name="Helmstaedt K."/>
            <person name="Henrissat B."/>
            <person name="Hofmann G."/>
            <person name="Homan T."/>
            <person name="Horio T."/>
            <person name="Horiuchi H."/>
            <person name="James S."/>
            <person name="Jones M."/>
            <person name="Karaffa L."/>
            <person name="Karanyi Z."/>
            <person name="Kato M."/>
            <person name="Keller N."/>
            <person name="Kelly D.E."/>
            <person name="Kiel J.A."/>
            <person name="Kim J.M."/>
            <person name="van der Klei I.J."/>
            <person name="Klis F.M."/>
            <person name="Kovalchuk A."/>
            <person name="Krasevec N."/>
            <person name="Kubicek C.P."/>
            <person name="Liu B."/>
            <person name="Maccabe A."/>
            <person name="Meyer V."/>
            <person name="Mirabito P."/>
            <person name="Miskei M."/>
            <person name="Mos M."/>
            <person name="Mullins J."/>
            <person name="Nelson D.R."/>
            <person name="Nielsen J."/>
            <person name="Oakley B.R."/>
            <person name="Osmani S.A."/>
            <person name="Pakula T."/>
            <person name="Paszewski A."/>
            <person name="Paulsen I."/>
            <person name="Pilsyk S."/>
            <person name="Pocsi I."/>
            <person name="Punt P.J."/>
            <person name="Ram A.F."/>
            <person name="Ren Q."/>
            <person name="Robellet X."/>
            <person name="Robson G."/>
            <person name="Seiboth B."/>
            <person name="van Solingen P."/>
            <person name="Specht T."/>
            <person name="Sun J."/>
            <person name="Taheri-Talesh N."/>
            <person name="Takeshita N."/>
            <person name="Ussery D."/>
            <person name="vanKuyk P.A."/>
            <person name="Visser H."/>
            <person name="van de Vondervoort P.J."/>
            <person name="de Vries R.P."/>
            <person name="Walton J."/>
            <person name="Xiang X."/>
            <person name="Xiong Y."/>
            <person name="Zeng A.P."/>
            <person name="Brandt B.W."/>
            <person name="Cornell M.J."/>
            <person name="van den Hondel C.A."/>
            <person name="Visser J."/>
            <person name="Oliver S.G."/>
            <person name="Turner G."/>
        </authorList>
    </citation>
    <scope>GENOME REANNOTATION</scope>
    <source>
        <strain>FGSC A4 / ATCC 38163 / CBS 112.46 / NRRL 194 / M139</strain>
    </source>
</reference>
<gene>
    <name type="primary">pgaB</name>
    <name type="synonym">pecB</name>
    <name type="ORF">AN4372</name>
</gene>
<proteinExistence type="evidence at protein level"/>
<accession>Q5B508</accession>
<accession>C8V8X1</accession>
<accession>Q1HFT2</accession>
<keyword id="KW-0961">Cell wall biogenesis/degradation</keyword>
<keyword id="KW-1015">Disulfide bond</keyword>
<keyword id="KW-0325">Glycoprotein</keyword>
<keyword id="KW-0326">Glycosidase</keyword>
<keyword id="KW-0378">Hydrolase</keyword>
<keyword id="KW-1185">Reference proteome</keyword>
<keyword id="KW-0677">Repeat</keyword>
<keyword id="KW-0964">Secreted</keyword>
<keyword id="KW-0732">Signal</keyword>
<keyword id="KW-0865">Zymogen</keyword>
<feature type="signal peptide" evidence="2">
    <location>
        <begin position="1"/>
        <end position="20"/>
    </location>
</feature>
<feature type="propeptide" id="PRO_0000393654" evidence="2">
    <location>
        <begin position="21"/>
        <end position="29"/>
    </location>
</feature>
<feature type="chain" id="PRO_0000393655" description="Endopolygalacturonase B">
    <location>
        <begin position="30"/>
        <end position="364"/>
    </location>
</feature>
<feature type="repeat" description="PbH1 1">
    <location>
        <begin position="159"/>
        <end position="188"/>
    </location>
</feature>
<feature type="repeat" description="PbH1 2">
    <location>
        <begin position="189"/>
        <end position="210"/>
    </location>
</feature>
<feature type="repeat" description="PbH1 3">
    <location>
        <begin position="211"/>
        <end position="231"/>
    </location>
</feature>
<feature type="repeat" description="PbH1 4">
    <location>
        <begin position="240"/>
        <end position="261"/>
    </location>
</feature>
<feature type="repeat" description="PbH1 5">
    <location>
        <begin position="269"/>
        <end position="291"/>
    </location>
</feature>
<feature type="repeat" description="PbH1 6">
    <location>
        <begin position="303"/>
        <end position="348"/>
    </location>
</feature>
<feature type="active site" description="Proton donor" evidence="3">
    <location>
        <position position="203"/>
    </location>
</feature>
<feature type="active site" evidence="3">
    <location>
        <position position="225"/>
    </location>
</feature>
<feature type="glycosylation site" description="N-linked (GlcNAc...) asparagine" evidence="2">
    <location>
        <position position="138"/>
    </location>
</feature>
<feature type="disulfide bond" evidence="1">
    <location>
        <begin position="32"/>
        <end position="47"/>
    </location>
</feature>
<feature type="disulfide bond" evidence="1">
    <location>
        <begin position="205"/>
        <end position="221"/>
    </location>
</feature>
<feature type="disulfide bond" evidence="1">
    <location>
        <begin position="331"/>
        <end position="336"/>
    </location>
</feature>
<feature type="disulfide bond" evidence="1">
    <location>
        <begin position="355"/>
        <end position="364"/>
    </location>
</feature>